<protein>
    <recommendedName>
        <fullName>Cell death-inducing p53-target protein 1</fullName>
    </recommendedName>
    <alternativeName>
        <fullName>LITAF-like protein</fullName>
    </alternativeName>
</protein>
<evidence type="ECO:0000250" key="1">
    <source>
        <dbReference type="UniProtKB" id="Q99732"/>
    </source>
</evidence>
<evidence type="ECO:0000250" key="2">
    <source>
        <dbReference type="UniProtKB" id="Q9H305"/>
    </source>
</evidence>
<evidence type="ECO:0000255" key="3">
    <source>
        <dbReference type="PROSITE-ProRule" id="PRU01181"/>
    </source>
</evidence>
<evidence type="ECO:0000256" key="4">
    <source>
        <dbReference type="SAM" id="MobiDB-lite"/>
    </source>
</evidence>
<evidence type="ECO:0000305" key="5"/>
<keyword id="KW-0053">Apoptosis</keyword>
<keyword id="KW-0967">Endosome</keyword>
<keyword id="KW-0458">Lysosome</keyword>
<keyword id="KW-0472">Membrane</keyword>
<keyword id="KW-0479">Metal-binding</keyword>
<keyword id="KW-1185">Reference proteome</keyword>
<keyword id="KW-0862">Zinc</keyword>
<proteinExistence type="evidence at transcript level"/>
<organism>
    <name type="scientific">Xenopus tropicalis</name>
    <name type="common">Western clawed frog</name>
    <name type="synonym">Silurana tropicalis</name>
    <dbReference type="NCBI Taxonomy" id="8364"/>
    <lineage>
        <taxon>Eukaryota</taxon>
        <taxon>Metazoa</taxon>
        <taxon>Chordata</taxon>
        <taxon>Craniata</taxon>
        <taxon>Vertebrata</taxon>
        <taxon>Euteleostomi</taxon>
        <taxon>Amphibia</taxon>
        <taxon>Batrachia</taxon>
        <taxon>Anura</taxon>
        <taxon>Pipoidea</taxon>
        <taxon>Pipidae</taxon>
        <taxon>Xenopodinae</taxon>
        <taxon>Xenopus</taxon>
        <taxon>Silurana</taxon>
    </lineage>
</organism>
<name>CDIP1_XENTR</name>
<sequence>MASDPPPPYPGGPSAPLLEEKQGLPRMEEPRAAPYPQAMPFAPPDCGPPPYDANPGYIAPNPGFYPPPGPYAPMGYYPPTPGQFQPPYPSQYPSPGAQGTAVIVPPGPSSTSAATTVTSTTTTVTVLQGEIFQGSPVQTVCTNCQQPITTKISHDIGLMNFLLCCFCCFVGCDLGCCLIPCIINDLKDVTHSCPNCKYHIYTYRRMC</sequence>
<dbReference type="EMBL" id="BC091584">
    <property type="protein sequence ID" value="AAH91584.1"/>
    <property type="molecule type" value="mRNA"/>
</dbReference>
<dbReference type="RefSeq" id="NP_001025631.1">
    <property type="nucleotide sequence ID" value="NM_001030460.2"/>
</dbReference>
<dbReference type="RefSeq" id="XP_031748562.1">
    <property type="nucleotide sequence ID" value="XM_031892702.1"/>
</dbReference>
<dbReference type="RefSeq" id="XP_031748563.1">
    <property type="nucleotide sequence ID" value="XM_031892703.1"/>
</dbReference>
<dbReference type="RefSeq" id="XP_031748564.1">
    <property type="nucleotide sequence ID" value="XM_031892704.1"/>
</dbReference>
<dbReference type="RefSeq" id="XP_031748565.1">
    <property type="nucleotide sequence ID" value="XM_031892705.1"/>
</dbReference>
<dbReference type="RefSeq" id="XP_031748566.1">
    <property type="nucleotide sequence ID" value="XM_031892706.1"/>
</dbReference>
<dbReference type="RefSeq" id="XP_031748567.1">
    <property type="nucleotide sequence ID" value="XM_031892707.1"/>
</dbReference>
<dbReference type="RefSeq" id="XP_031748568.1">
    <property type="nucleotide sequence ID" value="XM_031892708.1"/>
</dbReference>
<dbReference type="FunCoup" id="Q5BJ83">
    <property type="interactions" value="296"/>
</dbReference>
<dbReference type="STRING" id="8364.ENSXETP00000034474"/>
<dbReference type="DNASU" id="595019"/>
<dbReference type="GeneID" id="595019"/>
<dbReference type="KEGG" id="xtr:595019"/>
<dbReference type="AGR" id="Xenbase:XB-GENE-5752851"/>
<dbReference type="CTD" id="29965"/>
<dbReference type="Xenbase" id="XB-GENE-5752851">
    <property type="gene designation" value="cdip1"/>
</dbReference>
<dbReference type="InParanoid" id="Q5BJ83"/>
<dbReference type="OMA" id="YTYKRVC"/>
<dbReference type="OrthoDB" id="5599753at2759"/>
<dbReference type="Proteomes" id="UP000008143">
    <property type="component" value="Chromosome 9"/>
</dbReference>
<dbReference type="Bgee" id="ENSXETG00000037174">
    <property type="expression patterns" value="Expressed in skeletal muscle tissue and 17 other cell types or tissues"/>
</dbReference>
<dbReference type="GO" id="GO:0098560">
    <property type="term" value="C:cytoplasmic side of late endosome membrane"/>
    <property type="evidence" value="ECO:0000250"/>
    <property type="project" value="UniProtKB"/>
</dbReference>
<dbReference type="GO" id="GO:0098574">
    <property type="term" value="C:cytoplasmic side of lysosomal membrane"/>
    <property type="evidence" value="ECO:0000250"/>
    <property type="project" value="UniProtKB"/>
</dbReference>
<dbReference type="GO" id="GO:0046872">
    <property type="term" value="F:metal ion binding"/>
    <property type="evidence" value="ECO:0007669"/>
    <property type="project" value="UniProtKB-KW"/>
</dbReference>
<dbReference type="GO" id="GO:0006915">
    <property type="term" value="P:apoptotic process"/>
    <property type="evidence" value="ECO:0007669"/>
    <property type="project" value="UniProtKB-KW"/>
</dbReference>
<dbReference type="InterPro" id="IPR006629">
    <property type="entry name" value="LITAF"/>
</dbReference>
<dbReference type="InterPro" id="IPR037519">
    <property type="entry name" value="LITAF_fam"/>
</dbReference>
<dbReference type="PANTHER" id="PTHR23292:SF7">
    <property type="entry name" value="CELL DEATH-INDUCING P53-TARGET PROTEIN 1"/>
    <property type="match status" value="1"/>
</dbReference>
<dbReference type="PANTHER" id="PTHR23292">
    <property type="entry name" value="LIPOPOLYSACCHARIDE-INDUCED TUMOR NECROSIS FACTOR-ALPHA FACTOR"/>
    <property type="match status" value="1"/>
</dbReference>
<dbReference type="Pfam" id="PF10601">
    <property type="entry name" value="zf-LITAF-like"/>
    <property type="match status" value="1"/>
</dbReference>
<dbReference type="SMART" id="SM00714">
    <property type="entry name" value="LITAF"/>
    <property type="match status" value="1"/>
</dbReference>
<dbReference type="PROSITE" id="PS51837">
    <property type="entry name" value="LITAF"/>
    <property type="match status" value="1"/>
</dbReference>
<gene>
    <name type="primary">cdip1</name>
</gene>
<reference key="1">
    <citation type="submission" date="2005-03" db="EMBL/GenBank/DDBJ databases">
        <authorList>
            <consortium name="NIH - Xenopus Gene Collection (XGC) project"/>
        </authorList>
    </citation>
    <scope>NUCLEOTIDE SEQUENCE [LARGE SCALE MRNA]</scope>
    <source>
        <tissue>Embryo</tissue>
    </source>
</reference>
<feature type="chain" id="PRO_0000280340" description="Cell death-inducing p53-target protein 1">
    <location>
        <begin position="1"/>
        <end position="207"/>
    </location>
</feature>
<feature type="domain" description="LITAF" evidence="3">
    <location>
        <begin position="121"/>
        <end position="205"/>
    </location>
</feature>
<feature type="region of interest" description="Disordered" evidence="4">
    <location>
        <begin position="1"/>
        <end position="54"/>
    </location>
</feature>
<feature type="region of interest" description="Membrane-binding amphipathic helix" evidence="5">
    <location>
        <begin position="161"/>
        <end position="183"/>
    </location>
</feature>
<feature type="compositionally biased region" description="Pro residues" evidence="4">
    <location>
        <begin position="1"/>
        <end position="13"/>
    </location>
</feature>
<feature type="compositionally biased region" description="Basic and acidic residues" evidence="4">
    <location>
        <begin position="18"/>
        <end position="31"/>
    </location>
</feature>
<feature type="compositionally biased region" description="Pro residues" evidence="4">
    <location>
        <begin position="41"/>
        <end position="52"/>
    </location>
</feature>
<feature type="binding site" evidence="1">
    <location>
        <position position="141"/>
    </location>
    <ligand>
        <name>Zn(2+)</name>
        <dbReference type="ChEBI" id="CHEBI:29105"/>
    </ligand>
</feature>
<feature type="binding site" evidence="1">
    <location>
        <position position="144"/>
    </location>
    <ligand>
        <name>Zn(2+)</name>
        <dbReference type="ChEBI" id="CHEBI:29105"/>
    </ligand>
</feature>
<feature type="binding site" evidence="1">
    <location>
        <position position="193"/>
    </location>
    <ligand>
        <name>Zn(2+)</name>
        <dbReference type="ChEBI" id="CHEBI:29105"/>
    </ligand>
</feature>
<feature type="binding site" evidence="1">
    <location>
        <position position="196"/>
    </location>
    <ligand>
        <name>Zn(2+)</name>
        <dbReference type="ChEBI" id="CHEBI:29105"/>
    </ligand>
</feature>
<comment type="function">
    <text evidence="2">May act as a p53/TP53-apoptotic effector.</text>
</comment>
<comment type="subcellular location">
    <subcellularLocation>
        <location evidence="2">Late endosome membrane</location>
        <topology evidence="2">Peripheral membrane protein</topology>
        <orientation evidence="2">Cytoplasmic side</orientation>
    </subcellularLocation>
    <subcellularLocation>
        <location evidence="2">Lysosome membrane</location>
        <topology evidence="2">Peripheral membrane protein</topology>
        <orientation evidence="2">Cytoplasmic side</orientation>
    </subcellularLocation>
</comment>
<comment type="domain">
    <text evidence="1">The LITAF domain is stabilized by a bound zinc ion. The LITAF domain contains an amphipathic helix that mediates interaction with lipid membranes.</text>
</comment>
<comment type="similarity">
    <text evidence="5">Belongs to the CDIP1/LITAF family.</text>
</comment>
<accession>Q5BJ83</accession>